<accession>Q9SEP2</accession>
<feature type="initiator methionine" description="Removed" evidence="1">
    <location>
        <position position="1"/>
    </location>
</feature>
<feature type="chain" id="PRO_0000215963" description="Chalcone synthase">
    <location>
        <begin position="2"/>
        <end position="395"/>
    </location>
</feature>
<feature type="active site" evidence="2">
    <location>
        <position position="169"/>
    </location>
</feature>
<feature type="modified residue" description="N-acetylvaline" evidence="1">
    <location>
        <position position="2"/>
    </location>
</feature>
<protein>
    <recommendedName>
        <fullName>Chalcone synthase</fullName>
        <ecNumber>2.3.1.74</ecNumber>
    </recommendedName>
    <alternativeName>
        <fullName>Naringenin-chalcone synthase</fullName>
    </alternativeName>
</protein>
<evidence type="ECO:0000250" key="1">
    <source>
        <dbReference type="UniProtKB" id="P13114"/>
    </source>
</evidence>
<evidence type="ECO:0000255" key="2">
    <source>
        <dbReference type="PROSITE-ProRule" id="PRU10023"/>
    </source>
</evidence>
<evidence type="ECO:0000305" key="3"/>
<dbReference type="EC" id="2.3.1.74"/>
<dbReference type="EMBL" id="AF112085">
    <property type="protein sequence ID" value="AAF23560.1"/>
    <property type="molecule type" value="Genomic_DNA"/>
</dbReference>
<dbReference type="SMR" id="Q9SEP2"/>
<dbReference type="UniPathway" id="UPA00154"/>
<dbReference type="GO" id="GO:0016210">
    <property type="term" value="F:naringenin-chalcone synthase activity"/>
    <property type="evidence" value="ECO:0007669"/>
    <property type="project" value="UniProtKB-EC"/>
</dbReference>
<dbReference type="GO" id="GO:0009813">
    <property type="term" value="P:flavonoid biosynthetic process"/>
    <property type="evidence" value="ECO:0007669"/>
    <property type="project" value="UniProtKB-UniPathway"/>
</dbReference>
<dbReference type="GO" id="GO:0030639">
    <property type="term" value="P:polyketide biosynthetic process"/>
    <property type="evidence" value="ECO:0007669"/>
    <property type="project" value="TreeGrafter"/>
</dbReference>
<dbReference type="CDD" id="cd00831">
    <property type="entry name" value="CHS_like"/>
    <property type="match status" value="1"/>
</dbReference>
<dbReference type="FunFam" id="3.40.47.10:FF:000014">
    <property type="entry name" value="Chalcone synthase 1"/>
    <property type="match status" value="1"/>
</dbReference>
<dbReference type="FunFam" id="3.40.47.10:FF:000025">
    <property type="entry name" value="Chalcone synthase 2"/>
    <property type="match status" value="1"/>
</dbReference>
<dbReference type="Gene3D" id="3.40.47.10">
    <property type="match status" value="2"/>
</dbReference>
<dbReference type="InterPro" id="IPR012328">
    <property type="entry name" value="Chalcone/stilbene_synt_C"/>
</dbReference>
<dbReference type="InterPro" id="IPR001099">
    <property type="entry name" value="Chalcone/stilbene_synt_N"/>
</dbReference>
<dbReference type="InterPro" id="IPR018088">
    <property type="entry name" value="Chalcone/stilbene_synthase_AS"/>
</dbReference>
<dbReference type="InterPro" id="IPR011141">
    <property type="entry name" value="Polyketide_synthase_type-III"/>
</dbReference>
<dbReference type="InterPro" id="IPR016039">
    <property type="entry name" value="Thiolase-like"/>
</dbReference>
<dbReference type="PANTHER" id="PTHR11877:SF14">
    <property type="entry name" value="CHALCONE SYNTHASE"/>
    <property type="match status" value="1"/>
</dbReference>
<dbReference type="PANTHER" id="PTHR11877">
    <property type="entry name" value="HYDROXYMETHYLGLUTARYL-COA SYNTHASE"/>
    <property type="match status" value="1"/>
</dbReference>
<dbReference type="Pfam" id="PF02797">
    <property type="entry name" value="Chal_sti_synt_C"/>
    <property type="match status" value="1"/>
</dbReference>
<dbReference type="Pfam" id="PF00195">
    <property type="entry name" value="Chal_sti_synt_N"/>
    <property type="match status" value="1"/>
</dbReference>
<dbReference type="PIRSF" id="PIRSF000451">
    <property type="entry name" value="PKS_III"/>
    <property type="match status" value="1"/>
</dbReference>
<dbReference type="SUPFAM" id="SSF53901">
    <property type="entry name" value="Thiolase-like"/>
    <property type="match status" value="2"/>
</dbReference>
<dbReference type="PROSITE" id="PS00441">
    <property type="entry name" value="CHALCONE_SYNTH"/>
    <property type="match status" value="1"/>
</dbReference>
<keyword id="KW-0007">Acetylation</keyword>
<keyword id="KW-0012">Acyltransferase</keyword>
<keyword id="KW-0284">Flavonoid biosynthesis</keyword>
<keyword id="KW-0808">Transferase</keyword>
<gene>
    <name type="primary">CHS</name>
</gene>
<comment type="function">
    <text>The primary product of this enzyme is 4,2',4',6'-tetrahydroxychalcone (also termed naringenin-chalcone or chalcone) which can under specific conditions spontaneously isomerize into naringenin.</text>
</comment>
<comment type="catalytic activity">
    <reaction evidence="2">
        <text>(E)-4-coumaroyl-CoA + 3 malonyl-CoA + 3 H(+) = 2',4,4',6'-tetrahydroxychalcone + 3 CO2 + 4 CoA</text>
        <dbReference type="Rhea" id="RHEA:11128"/>
        <dbReference type="ChEBI" id="CHEBI:15378"/>
        <dbReference type="ChEBI" id="CHEBI:15413"/>
        <dbReference type="ChEBI" id="CHEBI:16526"/>
        <dbReference type="ChEBI" id="CHEBI:57287"/>
        <dbReference type="ChEBI" id="CHEBI:57384"/>
        <dbReference type="ChEBI" id="CHEBI:85008"/>
        <dbReference type="EC" id="2.3.1.74"/>
    </reaction>
</comment>
<comment type="pathway">
    <text>Secondary metabolite biosynthesis; flavonoid biosynthesis.</text>
</comment>
<comment type="similarity">
    <text evidence="3">Belongs to the thiolase-like superfamily. Chalcone/stilbene synthases family.</text>
</comment>
<name>CHSY_CARAN</name>
<sequence length="395" mass="43204">MVMGDTPSLDEIRKAQRADGPAGILAIGTANPANYVIQAEYPDYYFRITNSEHMTDLKEKFKRMCDKSTIRKRHMHVTEEFLKENPNMCAYMAPSLDARQDIVVVEVPKLGKEAAVKAIKEWGQPKSKITHLVFCTTSGVDMPGADYQLTKLLGLRPSVKRLMMYQQGCFAGGTVLRLAKDLAENNRGARVLVVCSEITAVTFRGPSDTHLDSLVGQALFSDGAAALIVGSDPDTSVGEKPIFEMVSAAQTILPDSDGAIDGHLREVGLTFHLLKDVPGLISKNIEKSLDEAFKPLGISDWNSLFWIAHPGGPAILDQVEIKLGLKEEKMRATRHVMREYGNMSSACVLFILDEMRKKSAKDGVATTGEGLEWGVLFGFGPGLTVETVVLHSVPL</sequence>
<proteinExistence type="inferred from homology"/>
<organism>
    <name type="scientific">Cardamine amara</name>
    <name type="common">Large bitter-cress</name>
    <dbReference type="NCBI Taxonomy" id="50461"/>
    <lineage>
        <taxon>Eukaryota</taxon>
        <taxon>Viridiplantae</taxon>
        <taxon>Streptophyta</taxon>
        <taxon>Embryophyta</taxon>
        <taxon>Tracheophyta</taxon>
        <taxon>Spermatophyta</taxon>
        <taxon>Magnoliopsida</taxon>
        <taxon>eudicotyledons</taxon>
        <taxon>Gunneridae</taxon>
        <taxon>Pentapetalae</taxon>
        <taxon>rosids</taxon>
        <taxon>malvids</taxon>
        <taxon>Brassicales</taxon>
        <taxon>Brassicaceae</taxon>
        <taxon>Cardamineae</taxon>
        <taxon>Cardamine</taxon>
    </lineage>
</organism>
<reference key="1">
    <citation type="journal article" date="2000" name="Mol. Biol. Evol.">
        <title>Comparative evolutionary analysis of chalcone synthase and alcohol dehydrogenase loci in Arabidopsis, Arabis, and related genera (Brassicaceae).</title>
        <authorList>
            <person name="Koch M.A."/>
            <person name="Haubold B."/>
            <person name="Mitchell-Olds T."/>
        </authorList>
    </citation>
    <scope>NUCLEOTIDE SEQUENCE [GENOMIC DNA]</scope>
    <source>
        <strain>Cama</strain>
    </source>
</reference>